<feature type="chain" id="PRO_0000090687" description="Mitochondrial GTP/GDP carrier protein 1">
    <location>
        <begin position="1"/>
        <end position="300"/>
    </location>
</feature>
<feature type="transmembrane region" description="Helical; Name=1" evidence="1">
    <location>
        <begin position="14"/>
        <end position="34"/>
    </location>
</feature>
<feature type="transmembrane region" description="Helical; Name=2" evidence="1">
    <location>
        <begin position="85"/>
        <end position="101"/>
    </location>
</feature>
<feature type="transmembrane region" description="Helical; Name=3" evidence="1">
    <location>
        <begin position="122"/>
        <end position="142"/>
    </location>
</feature>
<feature type="transmembrane region" description="Helical; Name=4" evidence="1">
    <location>
        <begin position="173"/>
        <end position="189"/>
    </location>
</feature>
<feature type="transmembrane region" description="Helical; Name=5" evidence="1">
    <location>
        <begin position="214"/>
        <end position="234"/>
    </location>
</feature>
<feature type="transmembrane region" description="Helical; Name=6" evidence="1">
    <location>
        <begin position="268"/>
        <end position="285"/>
    </location>
</feature>
<feature type="repeat" description="Solcar 1">
    <location>
        <begin position="8"/>
        <end position="108"/>
    </location>
</feature>
<feature type="repeat" description="Solcar 2">
    <location>
        <begin position="117"/>
        <end position="198"/>
    </location>
</feature>
<feature type="repeat" description="Solcar 3">
    <location>
        <begin position="208"/>
        <end position="293"/>
    </location>
</feature>
<gene>
    <name type="primary">GGC1</name>
    <name type="synonym">SHM1</name>
    <name type="synonym">YHM1</name>
    <name type="ordered locus">YDL198C</name>
    <name type="ORF">D1214</name>
</gene>
<evidence type="ECO:0000255" key="1"/>
<evidence type="ECO:0000269" key="2">
    <source>
    </source>
</evidence>
<evidence type="ECO:0000269" key="3">
    <source>
    </source>
</evidence>
<evidence type="ECO:0000269" key="4">
    <source>
    </source>
</evidence>
<evidence type="ECO:0000305" key="5"/>
<dbReference type="EMBL" id="U08352">
    <property type="protein sequence ID" value="AAC49493.1"/>
    <property type="molecule type" value="Genomic_DNA"/>
</dbReference>
<dbReference type="EMBL" id="X83276">
    <property type="protein sequence ID" value="CAA58249.1"/>
    <property type="molecule type" value="Genomic_DNA"/>
</dbReference>
<dbReference type="EMBL" id="X99000">
    <property type="protein sequence ID" value="CAA67471.1"/>
    <property type="molecule type" value="Genomic_DNA"/>
</dbReference>
<dbReference type="EMBL" id="Z74246">
    <property type="protein sequence ID" value="CAA98775.1"/>
    <property type="molecule type" value="Genomic_DNA"/>
</dbReference>
<dbReference type="EMBL" id="AY693086">
    <property type="protein sequence ID" value="AAT93105.1"/>
    <property type="molecule type" value="Genomic_DNA"/>
</dbReference>
<dbReference type="EMBL" id="BK006938">
    <property type="protein sequence ID" value="DAA11666.1"/>
    <property type="molecule type" value="Genomic_DNA"/>
</dbReference>
<dbReference type="PIR" id="S58779">
    <property type="entry name" value="S58779"/>
</dbReference>
<dbReference type="RefSeq" id="NP_010083.1">
    <property type="nucleotide sequence ID" value="NM_001180258.1"/>
</dbReference>
<dbReference type="SASBDB" id="P38988"/>
<dbReference type="SMR" id="P38988"/>
<dbReference type="BioGRID" id="31848">
    <property type="interactions" value="50"/>
</dbReference>
<dbReference type="DIP" id="DIP-7756N"/>
<dbReference type="FunCoup" id="P38988">
    <property type="interactions" value="146"/>
</dbReference>
<dbReference type="IntAct" id="P38988">
    <property type="interactions" value="28"/>
</dbReference>
<dbReference type="MINT" id="P38988"/>
<dbReference type="STRING" id="4932.YDL198C"/>
<dbReference type="TCDB" id="2.A.29.21.1">
    <property type="family name" value="the mitochondrial carrier (mc) family"/>
</dbReference>
<dbReference type="iPTMnet" id="P38988"/>
<dbReference type="PaxDb" id="4932-YDL198C"/>
<dbReference type="PeptideAtlas" id="P38988"/>
<dbReference type="EnsemblFungi" id="YDL198C_mRNA">
    <property type="protein sequence ID" value="YDL198C"/>
    <property type="gene ID" value="YDL198C"/>
</dbReference>
<dbReference type="GeneID" id="851329"/>
<dbReference type="KEGG" id="sce:YDL198C"/>
<dbReference type="AGR" id="SGD:S000002357"/>
<dbReference type="SGD" id="S000002357">
    <property type="gene designation" value="GGC1"/>
</dbReference>
<dbReference type="VEuPathDB" id="FungiDB:YDL198C"/>
<dbReference type="eggNOG" id="KOG0750">
    <property type="taxonomic scope" value="Eukaryota"/>
</dbReference>
<dbReference type="HOGENOM" id="CLU_053371_0_0_1"/>
<dbReference type="InParanoid" id="P38988"/>
<dbReference type="OMA" id="GQPWFSD"/>
<dbReference type="OrthoDB" id="409947at2759"/>
<dbReference type="BioCyc" id="YEAST:G3O-29582-MONOMER"/>
<dbReference type="SABIO-RK" id="P38988"/>
<dbReference type="BioGRID-ORCS" id="851329">
    <property type="hits" value="1 hit in 10 CRISPR screens"/>
</dbReference>
<dbReference type="PRO" id="PR:P38988"/>
<dbReference type="Proteomes" id="UP000002311">
    <property type="component" value="Chromosome IV"/>
</dbReference>
<dbReference type="RNAct" id="P38988">
    <property type="molecule type" value="protein"/>
</dbReference>
<dbReference type="GO" id="GO:0005743">
    <property type="term" value="C:mitochondrial inner membrane"/>
    <property type="evidence" value="ECO:0007669"/>
    <property type="project" value="UniProtKB-SubCell"/>
</dbReference>
<dbReference type="GO" id="GO:0005739">
    <property type="term" value="C:mitochondrion"/>
    <property type="evidence" value="ECO:0007005"/>
    <property type="project" value="SGD"/>
</dbReference>
<dbReference type="GO" id="GO:0001409">
    <property type="term" value="F:guanine nucleotide transmembrane transporter activity"/>
    <property type="evidence" value="ECO:0000314"/>
    <property type="project" value="SGD"/>
</dbReference>
<dbReference type="GO" id="GO:0001408">
    <property type="term" value="P:guanine nucleotide transport"/>
    <property type="evidence" value="ECO:0000314"/>
    <property type="project" value="SGD"/>
</dbReference>
<dbReference type="GO" id="GO:0006879">
    <property type="term" value="P:intracellular iron ion homeostasis"/>
    <property type="evidence" value="ECO:0000315"/>
    <property type="project" value="SGD"/>
</dbReference>
<dbReference type="GO" id="GO:0000002">
    <property type="term" value="P:mitochondrial genome maintenance"/>
    <property type="evidence" value="ECO:0000315"/>
    <property type="project" value="SGD"/>
</dbReference>
<dbReference type="GO" id="GO:0055085">
    <property type="term" value="P:transmembrane transport"/>
    <property type="evidence" value="ECO:0000314"/>
    <property type="project" value="SGD"/>
</dbReference>
<dbReference type="FunFam" id="1.50.40.10:FF:000010">
    <property type="entry name" value="Probable YHM1 (Mitochondrial carrier)"/>
    <property type="match status" value="1"/>
</dbReference>
<dbReference type="Gene3D" id="1.50.40.10">
    <property type="entry name" value="Mitochondrial carrier domain"/>
    <property type="match status" value="1"/>
</dbReference>
<dbReference type="InterPro" id="IPR053042">
    <property type="entry name" value="Mito_GTP/GDP_Carrier"/>
</dbReference>
<dbReference type="InterPro" id="IPR018108">
    <property type="entry name" value="Mitochondrial_sb/sol_carrier"/>
</dbReference>
<dbReference type="InterPro" id="IPR023395">
    <property type="entry name" value="Mt_carrier_dom_sf"/>
</dbReference>
<dbReference type="PANTHER" id="PTHR46974">
    <property type="entry name" value="MITOCHONDRIAL GTP/GDP CARRIER PROTEIN 1"/>
    <property type="match status" value="1"/>
</dbReference>
<dbReference type="PANTHER" id="PTHR46974:SF1">
    <property type="entry name" value="MITOCHONDRIAL GTP_GDP CARRIER PROTEIN 1"/>
    <property type="match status" value="1"/>
</dbReference>
<dbReference type="Pfam" id="PF00153">
    <property type="entry name" value="Mito_carr"/>
    <property type="match status" value="2"/>
</dbReference>
<dbReference type="SUPFAM" id="SSF103506">
    <property type="entry name" value="Mitochondrial carrier"/>
    <property type="match status" value="1"/>
</dbReference>
<dbReference type="PROSITE" id="PS50920">
    <property type="entry name" value="SOLCAR"/>
    <property type="match status" value="3"/>
</dbReference>
<protein>
    <recommendedName>
        <fullName>Mitochondrial GTP/GDP carrier protein 1</fullName>
    </recommendedName>
</protein>
<reference key="1">
    <citation type="journal article" date="1996" name="Yeast">
        <title>SHM1: a multicopy suppressor of a temperature-sensitive null mutation in the HMG1-like abf2 gene.</title>
        <authorList>
            <person name="Kao L.-R."/>
            <person name="Megraw T.L."/>
            <person name="Chae C.-B."/>
        </authorList>
    </citation>
    <scope>NUCLEOTIDE SEQUENCE [GENOMIC DNA]</scope>
</reference>
<reference key="2">
    <citation type="journal article" date="1996" name="Yeast">
        <title>The sequence of 23 kb surrounding the SNF3 locus on the left arm of yeast chromosome IV reveals the location of five known genes and characterizes at least six new open reading frames including putative genes for ribosomal protein L35 and a sugar transport protein.</title>
        <authorList>
            <person name="Verhasselt P."/>
            <person name="Voet M."/>
            <person name="Mathys J."/>
            <person name="Volckaert G."/>
        </authorList>
    </citation>
    <scope>NUCLEOTIDE SEQUENCE [GENOMIC DNA]</scope>
    <source>
        <strain>ATCC 96604 / S288c / FY1679</strain>
    </source>
</reference>
<reference key="3">
    <citation type="journal article" date="1997" name="Nature">
        <title>The nucleotide sequence of Saccharomyces cerevisiae chromosome IV.</title>
        <authorList>
            <person name="Jacq C."/>
            <person name="Alt-Moerbe J."/>
            <person name="Andre B."/>
            <person name="Arnold W."/>
            <person name="Bahr A."/>
            <person name="Ballesta J.P.G."/>
            <person name="Bargues M."/>
            <person name="Baron L."/>
            <person name="Becker A."/>
            <person name="Biteau N."/>
            <person name="Bloecker H."/>
            <person name="Blugeon C."/>
            <person name="Boskovic J."/>
            <person name="Brandt P."/>
            <person name="Brueckner M."/>
            <person name="Buitrago M.J."/>
            <person name="Coster F."/>
            <person name="Delaveau T."/>
            <person name="del Rey F."/>
            <person name="Dujon B."/>
            <person name="Eide L.G."/>
            <person name="Garcia-Cantalejo J.M."/>
            <person name="Goffeau A."/>
            <person name="Gomez-Peris A."/>
            <person name="Granotier C."/>
            <person name="Hanemann V."/>
            <person name="Hankeln T."/>
            <person name="Hoheisel J.D."/>
            <person name="Jaeger W."/>
            <person name="Jimenez A."/>
            <person name="Jonniaux J.-L."/>
            <person name="Kraemer C."/>
            <person name="Kuester H."/>
            <person name="Laamanen P."/>
            <person name="Legros Y."/>
            <person name="Louis E.J."/>
            <person name="Moeller-Rieker S."/>
            <person name="Monnet A."/>
            <person name="Moro M."/>
            <person name="Mueller-Auer S."/>
            <person name="Nussbaumer B."/>
            <person name="Paricio N."/>
            <person name="Paulin L."/>
            <person name="Perea J."/>
            <person name="Perez-Alonso M."/>
            <person name="Perez-Ortin J.E."/>
            <person name="Pohl T.M."/>
            <person name="Prydz H."/>
            <person name="Purnelle B."/>
            <person name="Rasmussen S.W."/>
            <person name="Remacha M.A."/>
            <person name="Revuelta J.L."/>
            <person name="Rieger M."/>
            <person name="Salom D."/>
            <person name="Saluz H.P."/>
            <person name="Saiz J.E."/>
            <person name="Saren A.-M."/>
            <person name="Schaefer M."/>
            <person name="Scharfe M."/>
            <person name="Schmidt E.R."/>
            <person name="Schneider C."/>
            <person name="Scholler P."/>
            <person name="Schwarz S."/>
            <person name="Soler-Mira A."/>
            <person name="Urrestarazu L.A."/>
            <person name="Verhasselt P."/>
            <person name="Vissers S."/>
            <person name="Voet M."/>
            <person name="Volckaert G."/>
            <person name="Wagner G."/>
            <person name="Wambutt R."/>
            <person name="Wedler E."/>
            <person name="Wedler H."/>
            <person name="Woelfl S."/>
            <person name="Harris D.E."/>
            <person name="Bowman S."/>
            <person name="Brown D."/>
            <person name="Churcher C.M."/>
            <person name="Connor R."/>
            <person name="Dedman K."/>
            <person name="Gentles S."/>
            <person name="Hamlin N."/>
            <person name="Hunt S."/>
            <person name="Jones L."/>
            <person name="McDonald S."/>
            <person name="Murphy L.D."/>
            <person name="Niblett D."/>
            <person name="Odell C."/>
            <person name="Oliver K."/>
            <person name="Rajandream M.A."/>
            <person name="Richards C."/>
            <person name="Shore L."/>
            <person name="Walsh S.V."/>
            <person name="Barrell B.G."/>
            <person name="Dietrich F.S."/>
            <person name="Mulligan J.T."/>
            <person name="Allen E."/>
            <person name="Araujo R."/>
            <person name="Aviles E."/>
            <person name="Berno A."/>
            <person name="Carpenter J."/>
            <person name="Chen E."/>
            <person name="Cherry J.M."/>
            <person name="Chung E."/>
            <person name="Duncan M."/>
            <person name="Hunicke-Smith S."/>
            <person name="Hyman R.W."/>
            <person name="Komp C."/>
            <person name="Lashkari D."/>
            <person name="Lew H."/>
            <person name="Lin D."/>
            <person name="Mosedale D."/>
            <person name="Nakahara K."/>
            <person name="Namath A."/>
            <person name="Oefner P."/>
            <person name="Oh C."/>
            <person name="Petel F.X."/>
            <person name="Roberts D."/>
            <person name="Schramm S."/>
            <person name="Schroeder M."/>
            <person name="Shogren T."/>
            <person name="Shroff N."/>
            <person name="Winant A."/>
            <person name="Yelton M.A."/>
            <person name="Botstein D."/>
            <person name="Davis R.W."/>
            <person name="Johnston M."/>
            <person name="Andrews S."/>
            <person name="Brinkman R."/>
            <person name="Cooper J."/>
            <person name="Ding H."/>
            <person name="Du Z."/>
            <person name="Favello A."/>
            <person name="Fulton L."/>
            <person name="Gattung S."/>
            <person name="Greco T."/>
            <person name="Hallsworth K."/>
            <person name="Hawkins J."/>
            <person name="Hillier L.W."/>
            <person name="Jier M."/>
            <person name="Johnson D."/>
            <person name="Johnston L."/>
            <person name="Kirsten J."/>
            <person name="Kucaba T."/>
            <person name="Langston Y."/>
            <person name="Latreille P."/>
            <person name="Le T."/>
            <person name="Mardis E."/>
            <person name="Menezes S."/>
            <person name="Miller N."/>
            <person name="Nhan M."/>
            <person name="Pauley A."/>
            <person name="Peluso D."/>
            <person name="Rifkin L."/>
            <person name="Riles L."/>
            <person name="Taich A."/>
            <person name="Trevaskis E."/>
            <person name="Vignati D."/>
            <person name="Wilcox L."/>
            <person name="Wohldman P."/>
            <person name="Vaudin M."/>
            <person name="Wilson R."/>
            <person name="Waterston R."/>
            <person name="Albermann K."/>
            <person name="Hani J."/>
            <person name="Heumann K."/>
            <person name="Kleine K."/>
            <person name="Mewes H.-W."/>
            <person name="Zollner A."/>
            <person name="Zaccaria P."/>
        </authorList>
    </citation>
    <scope>NUCLEOTIDE SEQUENCE [LARGE SCALE GENOMIC DNA]</scope>
    <source>
        <strain>ATCC 204508 / S288c</strain>
    </source>
</reference>
<reference key="4">
    <citation type="journal article" date="2014" name="G3 (Bethesda)">
        <title>The reference genome sequence of Saccharomyces cerevisiae: Then and now.</title>
        <authorList>
            <person name="Engel S.R."/>
            <person name="Dietrich F.S."/>
            <person name="Fisk D.G."/>
            <person name="Binkley G."/>
            <person name="Balakrishnan R."/>
            <person name="Costanzo M.C."/>
            <person name="Dwight S.S."/>
            <person name="Hitz B.C."/>
            <person name="Karra K."/>
            <person name="Nash R.S."/>
            <person name="Weng S."/>
            <person name="Wong E.D."/>
            <person name="Lloyd P."/>
            <person name="Skrzypek M.S."/>
            <person name="Miyasato S.R."/>
            <person name="Simison M."/>
            <person name="Cherry J.M."/>
        </authorList>
    </citation>
    <scope>GENOME REANNOTATION</scope>
    <source>
        <strain>ATCC 204508 / S288c</strain>
    </source>
</reference>
<reference key="5">
    <citation type="journal article" date="2007" name="Genome Res.">
        <title>Approaching a complete repository of sequence-verified protein-encoding clones for Saccharomyces cerevisiae.</title>
        <authorList>
            <person name="Hu Y."/>
            <person name="Rolfs A."/>
            <person name="Bhullar B."/>
            <person name="Murthy T.V.S."/>
            <person name="Zhu C."/>
            <person name="Berger M.F."/>
            <person name="Camargo A.A."/>
            <person name="Kelley F."/>
            <person name="McCarron S."/>
            <person name="Jepson D."/>
            <person name="Richardson A."/>
            <person name="Raphael J."/>
            <person name="Moreira D."/>
            <person name="Taycher E."/>
            <person name="Zuo D."/>
            <person name="Mohr S."/>
            <person name="Kane M.F."/>
            <person name="Williamson J."/>
            <person name="Simpson A.J.G."/>
            <person name="Bulyk M.L."/>
            <person name="Harlow E."/>
            <person name="Marsischky G."/>
            <person name="Kolodner R.D."/>
            <person name="LaBaer J."/>
        </authorList>
    </citation>
    <scope>NUCLEOTIDE SEQUENCE [GENOMIC DNA]</scope>
    <source>
        <strain>ATCC 204508 / S288c</strain>
    </source>
</reference>
<reference key="6">
    <citation type="journal article" date="2003" name="Proc. Natl. Acad. Sci. U.S.A.">
        <title>The proteome of Saccharomyces cerevisiae mitochondria.</title>
        <authorList>
            <person name="Sickmann A."/>
            <person name="Reinders J."/>
            <person name="Wagner Y."/>
            <person name="Joppich C."/>
            <person name="Zahedi R.P."/>
            <person name="Meyer H.E."/>
            <person name="Schoenfisch B."/>
            <person name="Perschil I."/>
            <person name="Chacinska A."/>
            <person name="Guiard B."/>
            <person name="Rehling P."/>
            <person name="Pfanner N."/>
            <person name="Meisinger C."/>
        </authorList>
    </citation>
    <scope>SUBCELLULAR LOCATION [LARGE SCALE ANALYSIS]</scope>
</reference>
<reference key="7">
    <citation type="journal article" date="2004" name="Biochem. J.">
        <title>Role of YHM1, encoding a mitochondrial carrier protein, in iron distribution of yeast.</title>
        <authorList>
            <person name="Lesuisse E."/>
            <person name="Lyver E.R."/>
            <person name="Knight S.A."/>
            <person name="Dancis A."/>
        </authorList>
    </citation>
    <scope>FUNCTION</scope>
</reference>
<reference key="8">
    <citation type="journal article" date="2004" name="J. Biol. Chem.">
        <title>Identification of the mitochondrial GTP/GDP transporter in Saccharomyces cerevisiae.</title>
        <authorList>
            <person name="Vozza A."/>
            <person name="Blanco E."/>
            <person name="Palmieri L."/>
            <person name="Palmieri F."/>
        </authorList>
    </citation>
    <scope>FUNCTION</scope>
    <scope>BIOPHYSICOCHEMICAL PROPERTIES</scope>
</reference>
<reference key="9">
    <citation type="journal article" date="2012" name="Proc. Natl. Acad. Sci. U.S.A.">
        <title>N-terminal acetylome analyses and functional insights of the N-terminal acetyltransferase NatB.</title>
        <authorList>
            <person name="Van Damme P."/>
            <person name="Lasa M."/>
            <person name="Polevoda B."/>
            <person name="Gazquez C."/>
            <person name="Elosegui-Artola A."/>
            <person name="Kim D.S."/>
            <person name="De Juan-Pardo E."/>
            <person name="Demeyer K."/>
            <person name="Hole K."/>
            <person name="Larrea E."/>
            <person name="Timmerman E."/>
            <person name="Prieto J."/>
            <person name="Arnesen T."/>
            <person name="Sherman F."/>
            <person name="Gevaert K."/>
            <person name="Aldabe R."/>
        </authorList>
    </citation>
    <scope>IDENTIFICATION BY MASS SPECTROMETRY [LARGE SCALE ANALYSIS]</scope>
</reference>
<proteinExistence type="evidence at protein level"/>
<organism>
    <name type="scientific">Saccharomyces cerevisiae (strain ATCC 204508 / S288c)</name>
    <name type="common">Baker's yeast</name>
    <dbReference type="NCBI Taxonomy" id="559292"/>
    <lineage>
        <taxon>Eukaryota</taxon>
        <taxon>Fungi</taxon>
        <taxon>Dikarya</taxon>
        <taxon>Ascomycota</taxon>
        <taxon>Saccharomycotina</taxon>
        <taxon>Saccharomycetes</taxon>
        <taxon>Saccharomycetales</taxon>
        <taxon>Saccharomycetaceae</taxon>
        <taxon>Saccharomyces</taxon>
    </lineage>
</organism>
<sequence length="300" mass="33215">MPHTDKKQSGLARLLGSASAGIMEIAVFHPVDTISKRLMSNHTKITSGQELNRVIFRDHFSEPLGKRLFTLFPGLGYAASYKVLQRVYKYGGQPFANEFLNKHYKKDFDNLFGEKTGKAMRSAAAGSLIGIGEIVLLPLDVLKIKRQTNPESFKGRGFIKILRDEGLFNLYRGWGWTAARNAPGSFALFGGNAFAKEYILGLKDYSQATWSQNFISSIVGACSSLIVSAPLDVIKTRIQNRNFDNPESGLRIVKNTLKNEGVTAFFKGLTPKLLTTGPKLVFSFALAQSLIPRFDNLLSK</sequence>
<accession>P38988</accession>
<accession>D6VRF6</accession>
<comment type="function">
    <text evidence="3 4">Mitochondrial GTP/GDP transporter required for GTP uptake and GDP exit from mitochondria. Involved in mitochondrial iron transport and essential for mitochondrial genome maintenance.</text>
</comment>
<comment type="biophysicochemical properties">
    <kinetics>
        <KM evidence="4">1.2 uM for GTP</KM>
        <KM evidence="4">4.7 uM for GDP</KM>
        <KM evidence="4">15.9 uM for dGTP</KM>
        <Vmax evidence="4">2.0 mmol/min/g enzyme</Vmax>
    </kinetics>
</comment>
<comment type="subcellular location">
    <subcellularLocation>
        <location evidence="2">Mitochondrion inner membrane</location>
        <topology evidence="2">Multi-pass membrane protein</topology>
    </subcellularLocation>
</comment>
<comment type="similarity">
    <text evidence="5">Belongs to the mitochondrial carrier (TC 2.A.29) family.</text>
</comment>
<keyword id="KW-0472">Membrane</keyword>
<keyword id="KW-0496">Mitochondrion</keyword>
<keyword id="KW-0999">Mitochondrion inner membrane</keyword>
<keyword id="KW-1185">Reference proteome</keyword>
<keyword id="KW-0677">Repeat</keyword>
<keyword id="KW-0812">Transmembrane</keyword>
<keyword id="KW-1133">Transmembrane helix</keyword>
<keyword id="KW-0813">Transport</keyword>
<name>GGC1_YEAST</name>